<reference key="1">
    <citation type="submission" date="2005-09" db="EMBL/GenBank/DDBJ databases">
        <title>Complete sequence of chromosome 2 of Rhodobacter sphaeroides 2.4.1.</title>
        <authorList>
            <person name="Copeland A."/>
            <person name="Lucas S."/>
            <person name="Lapidus A."/>
            <person name="Barry K."/>
            <person name="Detter J.C."/>
            <person name="Glavina T."/>
            <person name="Hammon N."/>
            <person name="Israni S."/>
            <person name="Pitluck S."/>
            <person name="Richardson P."/>
            <person name="Mackenzie C."/>
            <person name="Choudhary M."/>
            <person name="Larimer F."/>
            <person name="Hauser L.J."/>
            <person name="Land M."/>
            <person name="Donohue T.J."/>
            <person name="Kaplan S."/>
        </authorList>
    </citation>
    <scope>NUCLEOTIDE SEQUENCE [LARGE SCALE GENOMIC DNA]</scope>
    <source>
        <strain>ATCC 17023 / DSM 158 / JCM 6121 / CCUG 31486 / LMG 2827 / NBRC 12203 / NCIMB 8253 / ATH 2.4.1.</strain>
    </source>
</reference>
<evidence type="ECO:0000255" key="1">
    <source>
        <dbReference type="HAMAP-Rule" id="MF_00086"/>
    </source>
</evidence>
<sequence>MSRMNYVFTSESVSEGHPDKLCDRVSDAVLDTFLAEEPTARVACETFATTGRVVVGGEVGLSDPQKLDEFMERVDGIVRDCVKDIGYEQQEFHWRTIEVQNFLHRQSAHIAQGVDKDGAGDQGIMFGYACRETPELMPAPIQYSHAILRRLAEVRKSGQEPDLRPDAKSQLSLRYENGKPVEVRSIVLSTQHAHEEQTSDDIRAIVEPYIREVLPEGWITEATEWWVNPTGTFVIGGPDGDAGLTGRKIIVDTYGGAAPHGGGAFSGKDPTKVDRSAAYAARYLAKNVVAAGLAERCTLQVSYAIGVAKPLSIYVDTHGTGQVDAAQIEKAVADCMDLTPRGIREHLNLCRPIYARTSAYGHFGRAPEADGGFSWERTDLTDALLKAV</sequence>
<feature type="chain" id="PRO_0000241025" description="S-adenosylmethionine synthase">
    <location>
        <begin position="1"/>
        <end position="388"/>
    </location>
</feature>
<feature type="region of interest" description="Flexible loop" evidence="1">
    <location>
        <begin position="106"/>
        <end position="116"/>
    </location>
</feature>
<feature type="binding site" description="in other chain" evidence="1">
    <location>
        <position position="17"/>
    </location>
    <ligand>
        <name>ATP</name>
        <dbReference type="ChEBI" id="CHEBI:30616"/>
        <note>ligand shared between two neighboring subunits</note>
    </ligand>
</feature>
<feature type="binding site" evidence="1">
    <location>
        <position position="19"/>
    </location>
    <ligand>
        <name>Mg(2+)</name>
        <dbReference type="ChEBI" id="CHEBI:18420"/>
    </ligand>
</feature>
<feature type="binding site" evidence="1">
    <location>
        <position position="45"/>
    </location>
    <ligand>
        <name>K(+)</name>
        <dbReference type="ChEBI" id="CHEBI:29103"/>
    </ligand>
</feature>
<feature type="binding site" description="in other chain" evidence="1">
    <location>
        <position position="58"/>
    </location>
    <ligand>
        <name>L-methionine</name>
        <dbReference type="ChEBI" id="CHEBI:57844"/>
        <note>ligand shared between two neighboring subunits</note>
    </ligand>
</feature>
<feature type="binding site" description="in other chain" evidence="1">
    <location>
        <position position="106"/>
    </location>
    <ligand>
        <name>L-methionine</name>
        <dbReference type="ChEBI" id="CHEBI:57844"/>
        <note>ligand shared between two neighboring subunits</note>
    </ligand>
</feature>
<feature type="binding site" description="in other chain" evidence="1">
    <location>
        <begin position="166"/>
        <end position="168"/>
    </location>
    <ligand>
        <name>ATP</name>
        <dbReference type="ChEBI" id="CHEBI:30616"/>
        <note>ligand shared between two neighboring subunits</note>
    </ligand>
</feature>
<feature type="binding site" evidence="1">
    <location>
        <position position="241"/>
    </location>
    <ligand>
        <name>ATP</name>
        <dbReference type="ChEBI" id="CHEBI:30616"/>
        <note>ligand shared between two neighboring subunits</note>
    </ligand>
</feature>
<feature type="binding site" evidence="1">
    <location>
        <position position="241"/>
    </location>
    <ligand>
        <name>L-methionine</name>
        <dbReference type="ChEBI" id="CHEBI:57844"/>
        <note>ligand shared between two neighboring subunits</note>
    </ligand>
</feature>
<feature type="binding site" description="in other chain" evidence="1">
    <location>
        <begin position="247"/>
        <end position="248"/>
    </location>
    <ligand>
        <name>ATP</name>
        <dbReference type="ChEBI" id="CHEBI:30616"/>
        <note>ligand shared between two neighboring subunits</note>
    </ligand>
</feature>
<feature type="binding site" evidence="1">
    <location>
        <position position="264"/>
    </location>
    <ligand>
        <name>ATP</name>
        <dbReference type="ChEBI" id="CHEBI:30616"/>
        <note>ligand shared between two neighboring subunits</note>
    </ligand>
</feature>
<feature type="binding site" evidence="1">
    <location>
        <position position="268"/>
    </location>
    <ligand>
        <name>ATP</name>
        <dbReference type="ChEBI" id="CHEBI:30616"/>
        <note>ligand shared between two neighboring subunits</note>
    </ligand>
</feature>
<feature type="binding site" description="in other chain" evidence="1">
    <location>
        <position position="272"/>
    </location>
    <ligand>
        <name>L-methionine</name>
        <dbReference type="ChEBI" id="CHEBI:57844"/>
        <note>ligand shared between two neighboring subunits</note>
    </ligand>
</feature>
<proteinExistence type="inferred from homology"/>
<keyword id="KW-0067">ATP-binding</keyword>
<keyword id="KW-0963">Cytoplasm</keyword>
<keyword id="KW-0460">Magnesium</keyword>
<keyword id="KW-0479">Metal-binding</keyword>
<keyword id="KW-0547">Nucleotide-binding</keyword>
<keyword id="KW-0554">One-carbon metabolism</keyword>
<keyword id="KW-0630">Potassium</keyword>
<keyword id="KW-1185">Reference proteome</keyword>
<keyword id="KW-0808">Transferase</keyword>
<dbReference type="EC" id="2.5.1.6" evidence="1"/>
<dbReference type="EMBL" id="CP000144">
    <property type="protein sequence ID" value="ABA81198.1"/>
    <property type="molecule type" value="Genomic_DNA"/>
</dbReference>
<dbReference type="RefSeq" id="WP_002724558.1">
    <property type="nucleotide sequence ID" value="NZ_CP030272.1"/>
</dbReference>
<dbReference type="RefSeq" id="YP_355099.1">
    <property type="nucleotide sequence ID" value="NC_007494.2"/>
</dbReference>
<dbReference type="SMR" id="Q3IW86"/>
<dbReference type="STRING" id="272943.RSP_3595"/>
<dbReference type="EnsemblBacteria" id="ABA81198">
    <property type="protein sequence ID" value="ABA81198"/>
    <property type="gene ID" value="RSP_3595"/>
</dbReference>
<dbReference type="GeneID" id="67449073"/>
<dbReference type="KEGG" id="rsp:RSP_3595"/>
<dbReference type="PATRIC" id="fig|272943.9.peg.4031"/>
<dbReference type="eggNOG" id="COG0192">
    <property type="taxonomic scope" value="Bacteria"/>
</dbReference>
<dbReference type="OrthoDB" id="9801686at2"/>
<dbReference type="PhylomeDB" id="Q3IW86"/>
<dbReference type="UniPathway" id="UPA00315">
    <property type="reaction ID" value="UER00080"/>
</dbReference>
<dbReference type="Proteomes" id="UP000002703">
    <property type="component" value="Chromosome 2"/>
</dbReference>
<dbReference type="GO" id="GO:0005737">
    <property type="term" value="C:cytoplasm"/>
    <property type="evidence" value="ECO:0007669"/>
    <property type="project" value="UniProtKB-SubCell"/>
</dbReference>
<dbReference type="GO" id="GO:0005524">
    <property type="term" value="F:ATP binding"/>
    <property type="evidence" value="ECO:0007669"/>
    <property type="project" value="UniProtKB-UniRule"/>
</dbReference>
<dbReference type="GO" id="GO:0000287">
    <property type="term" value="F:magnesium ion binding"/>
    <property type="evidence" value="ECO:0007669"/>
    <property type="project" value="UniProtKB-UniRule"/>
</dbReference>
<dbReference type="GO" id="GO:0004478">
    <property type="term" value="F:methionine adenosyltransferase activity"/>
    <property type="evidence" value="ECO:0007669"/>
    <property type="project" value="UniProtKB-UniRule"/>
</dbReference>
<dbReference type="GO" id="GO:0006730">
    <property type="term" value="P:one-carbon metabolic process"/>
    <property type="evidence" value="ECO:0007669"/>
    <property type="project" value="UniProtKB-KW"/>
</dbReference>
<dbReference type="GO" id="GO:0006556">
    <property type="term" value="P:S-adenosylmethionine biosynthetic process"/>
    <property type="evidence" value="ECO:0007669"/>
    <property type="project" value="UniProtKB-UniRule"/>
</dbReference>
<dbReference type="CDD" id="cd18079">
    <property type="entry name" value="S-AdoMet_synt"/>
    <property type="match status" value="1"/>
</dbReference>
<dbReference type="FunFam" id="3.30.300.10:FF:000003">
    <property type="entry name" value="S-adenosylmethionine synthase"/>
    <property type="match status" value="1"/>
</dbReference>
<dbReference type="Gene3D" id="3.30.300.10">
    <property type="match status" value="3"/>
</dbReference>
<dbReference type="HAMAP" id="MF_00086">
    <property type="entry name" value="S_AdoMet_synth1"/>
    <property type="match status" value="1"/>
</dbReference>
<dbReference type="InterPro" id="IPR022631">
    <property type="entry name" value="ADOMET_SYNTHASE_CS"/>
</dbReference>
<dbReference type="InterPro" id="IPR022630">
    <property type="entry name" value="S-AdoMet_synt_C"/>
</dbReference>
<dbReference type="InterPro" id="IPR022629">
    <property type="entry name" value="S-AdoMet_synt_central"/>
</dbReference>
<dbReference type="InterPro" id="IPR022628">
    <property type="entry name" value="S-AdoMet_synt_N"/>
</dbReference>
<dbReference type="InterPro" id="IPR002133">
    <property type="entry name" value="S-AdoMet_synthetase"/>
</dbReference>
<dbReference type="InterPro" id="IPR022636">
    <property type="entry name" value="S-AdoMet_synthetase_sfam"/>
</dbReference>
<dbReference type="NCBIfam" id="TIGR01034">
    <property type="entry name" value="metK"/>
    <property type="match status" value="1"/>
</dbReference>
<dbReference type="PANTHER" id="PTHR11964">
    <property type="entry name" value="S-ADENOSYLMETHIONINE SYNTHETASE"/>
    <property type="match status" value="1"/>
</dbReference>
<dbReference type="Pfam" id="PF02773">
    <property type="entry name" value="S-AdoMet_synt_C"/>
    <property type="match status" value="1"/>
</dbReference>
<dbReference type="Pfam" id="PF02772">
    <property type="entry name" value="S-AdoMet_synt_M"/>
    <property type="match status" value="1"/>
</dbReference>
<dbReference type="Pfam" id="PF00438">
    <property type="entry name" value="S-AdoMet_synt_N"/>
    <property type="match status" value="1"/>
</dbReference>
<dbReference type="PIRSF" id="PIRSF000497">
    <property type="entry name" value="MAT"/>
    <property type="match status" value="1"/>
</dbReference>
<dbReference type="SUPFAM" id="SSF55973">
    <property type="entry name" value="S-adenosylmethionine synthetase"/>
    <property type="match status" value="3"/>
</dbReference>
<dbReference type="PROSITE" id="PS00376">
    <property type="entry name" value="ADOMET_SYNTHASE_1"/>
    <property type="match status" value="1"/>
</dbReference>
<dbReference type="PROSITE" id="PS00377">
    <property type="entry name" value="ADOMET_SYNTHASE_2"/>
    <property type="match status" value="1"/>
</dbReference>
<organism>
    <name type="scientific">Cereibacter sphaeroides (strain ATCC 17023 / DSM 158 / JCM 6121 / CCUG 31486 / LMG 2827 / NBRC 12203 / NCIMB 8253 / ATH 2.4.1.)</name>
    <name type="common">Rhodobacter sphaeroides</name>
    <dbReference type="NCBI Taxonomy" id="272943"/>
    <lineage>
        <taxon>Bacteria</taxon>
        <taxon>Pseudomonadati</taxon>
        <taxon>Pseudomonadota</taxon>
        <taxon>Alphaproteobacteria</taxon>
        <taxon>Rhodobacterales</taxon>
        <taxon>Paracoccaceae</taxon>
        <taxon>Cereibacter</taxon>
    </lineage>
</organism>
<accession>Q3IW86</accession>
<name>METK_CERS4</name>
<comment type="function">
    <text evidence="1">Catalyzes the formation of S-adenosylmethionine (AdoMet) from methionine and ATP. The overall synthetic reaction is composed of two sequential steps, AdoMet formation and the subsequent tripolyphosphate hydrolysis which occurs prior to release of AdoMet from the enzyme.</text>
</comment>
<comment type="catalytic activity">
    <reaction evidence="1">
        <text>L-methionine + ATP + H2O = S-adenosyl-L-methionine + phosphate + diphosphate</text>
        <dbReference type="Rhea" id="RHEA:21080"/>
        <dbReference type="ChEBI" id="CHEBI:15377"/>
        <dbReference type="ChEBI" id="CHEBI:30616"/>
        <dbReference type="ChEBI" id="CHEBI:33019"/>
        <dbReference type="ChEBI" id="CHEBI:43474"/>
        <dbReference type="ChEBI" id="CHEBI:57844"/>
        <dbReference type="ChEBI" id="CHEBI:59789"/>
        <dbReference type="EC" id="2.5.1.6"/>
    </reaction>
</comment>
<comment type="cofactor">
    <cofactor evidence="1">
        <name>Mg(2+)</name>
        <dbReference type="ChEBI" id="CHEBI:18420"/>
    </cofactor>
    <text evidence="1">Binds 2 divalent ions per subunit.</text>
</comment>
<comment type="cofactor">
    <cofactor evidence="1">
        <name>K(+)</name>
        <dbReference type="ChEBI" id="CHEBI:29103"/>
    </cofactor>
    <text evidence="1">Binds 1 potassium ion per subunit.</text>
</comment>
<comment type="pathway">
    <text evidence="1">Amino-acid biosynthesis; S-adenosyl-L-methionine biosynthesis; S-adenosyl-L-methionine from L-methionine: step 1/1.</text>
</comment>
<comment type="subunit">
    <text evidence="1">Homotetramer; dimer of dimers.</text>
</comment>
<comment type="subcellular location">
    <subcellularLocation>
        <location evidence="1">Cytoplasm</location>
    </subcellularLocation>
</comment>
<comment type="similarity">
    <text evidence="1">Belongs to the AdoMet synthase family.</text>
</comment>
<protein>
    <recommendedName>
        <fullName evidence="1">S-adenosylmethionine synthase</fullName>
        <shortName evidence="1">AdoMet synthase</shortName>
        <ecNumber evidence="1">2.5.1.6</ecNumber>
    </recommendedName>
    <alternativeName>
        <fullName evidence="1">MAT</fullName>
    </alternativeName>
    <alternativeName>
        <fullName evidence="1">Methionine adenosyltransferase</fullName>
    </alternativeName>
</protein>
<gene>
    <name evidence="1" type="primary">metK</name>
    <name type="ordered locus">RHOS4_36300</name>
    <name type="ORF">RSP_3595</name>
</gene>